<dbReference type="EMBL" id="X97336">
    <property type="protein sequence ID" value="CAA66005.1"/>
    <property type="molecule type" value="Genomic_DNA"/>
</dbReference>
<dbReference type="PIR" id="T11251">
    <property type="entry name" value="T11251"/>
</dbReference>
<dbReference type="RefSeq" id="NP_007372.1">
    <property type="nucleotide sequence ID" value="NC_001779.1"/>
</dbReference>
<dbReference type="SMR" id="Q96063"/>
<dbReference type="GeneID" id="808045"/>
<dbReference type="CTD" id="4509"/>
<dbReference type="GO" id="GO:0031966">
    <property type="term" value="C:mitochondrial membrane"/>
    <property type="evidence" value="ECO:0007669"/>
    <property type="project" value="UniProtKB-SubCell"/>
</dbReference>
<dbReference type="GO" id="GO:0045259">
    <property type="term" value="C:proton-transporting ATP synthase complex"/>
    <property type="evidence" value="ECO:0000250"/>
    <property type="project" value="UniProtKB"/>
</dbReference>
<dbReference type="GO" id="GO:0015078">
    <property type="term" value="F:proton transmembrane transporter activity"/>
    <property type="evidence" value="ECO:0007669"/>
    <property type="project" value="InterPro"/>
</dbReference>
<dbReference type="GO" id="GO:0015986">
    <property type="term" value="P:proton motive force-driven ATP synthesis"/>
    <property type="evidence" value="ECO:0007669"/>
    <property type="project" value="InterPro"/>
</dbReference>
<dbReference type="InterPro" id="IPR039017">
    <property type="entry name" value="ATP8_mammal"/>
</dbReference>
<dbReference type="InterPro" id="IPR001421">
    <property type="entry name" value="ATP8_metazoa"/>
</dbReference>
<dbReference type="PANTHER" id="PTHR13722">
    <property type="entry name" value="ATP SYNTHASE PROTEIN 8"/>
    <property type="match status" value="1"/>
</dbReference>
<dbReference type="PANTHER" id="PTHR13722:SF0">
    <property type="entry name" value="ATP SYNTHASE PROTEIN 8"/>
    <property type="match status" value="1"/>
</dbReference>
<dbReference type="Pfam" id="PF00895">
    <property type="entry name" value="ATP-synt_8"/>
    <property type="match status" value="1"/>
</dbReference>
<reference key="1">
    <citation type="journal article" date="1996" name="Mol. Biol. Evol.">
        <title>The complete mitochondrial DNA sequence of the greater Indian rhinoceros, Rhinoceros unicornis, and the Phylogenetic relationship among Carnivora, Perissodactyla, and Artiodactyla (+ Cetacea).</title>
        <authorList>
            <person name="Xu X."/>
            <person name="Janke A."/>
            <person name="Arnason U."/>
        </authorList>
    </citation>
    <scope>NUCLEOTIDE SEQUENCE [GENOMIC DNA]</scope>
    <source>
        <tissue>Kidney</tissue>
    </source>
</reference>
<feature type="chain" id="PRO_0000195581" description="ATP synthase protein 8">
    <location>
        <begin position="1"/>
        <end position="67"/>
    </location>
</feature>
<feature type="transmembrane region" description="Helical" evidence="4">
    <location>
        <begin position="8"/>
        <end position="24"/>
    </location>
</feature>
<feature type="modified residue" description="N6-acetyllysine; alternate" evidence="3">
    <location>
        <position position="54"/>
    </location>
</feature>
<feature type="modified residue" description="N6-succinyllysine; alternate" evidence="3">
    <location>
        <position position="54"/>
    </location>
</feature>
<feature type="modified residue" description="N6-acetyllysine" evidence="3">
    <location>
        <position position="57"/>
    </location>
</feature>
<organism>
    <name type="scientific">Rhinoceros unicornis</name>
    <name type="common">Greater Indian rhinoceros</name>
    <dbReference type="NCBI Taxonomy" id="9809"/>
    <lineage>
        <taxon>Eukaryota</taxon>
        <taxon>Metazoa</taxon>
        <taxon>Chordata</taxon>
        <taxon>Craniata</taxon>
        <taxon>Vertebrata</taxon>
        <taxon>Euteleostomi</taxon>
        <taxon>Mammalia</taxon>
        <taxon>Eutheria</taxon>
        <taxon>Laurasiatheria</taxon>
        <taxon>Perissodactyla</taxon>
        <taxon>Rhinocerotidae</taxon>
        <taxon>Rhinoceros</taxon>
    </lineage>
</organism>
<name>ATP8_RHIUN</name>
<sequence length="67" mass="7844">MPQLDTSTWFITITSMTITLFIMFQLKLSKHSYPSNPELKPINTSMHTTPWESKWTKIYSPLSLPQQ</sequence>
<accession>Q96063</accession>
<geneLocation type="mitochondrion"/>
<evidence type="ECO:0000250" key="1"/>
<evidence type="ECO:0000250" key="2">
    <source>
        <dbReference type="UniProtKB" id="P03928"/>
    </source>
</evidence>
<evidence type="ECO:0000250" key="3">
    <source>
        <dbReference type="UniProtKB" id="P03930"/>
    </source>
</evidence>
<evidence type="ECO:0000255" key="4"/>
<evidence type="ECO:0000305" key="5"/>
<comment type="function">
    <text evidence="1">Mitochondrial membrane ATP synthase (F(1)F(0) ATP synthase or Complex V) produces ATP from ADP in the presence of a proton gradient across the membrane which is generated by electron transport complexes of the respiratory chain. F-type ATPases consist of two structural domains, F(1) - containing the extramembraneous catalytic core and F(0) - containing the membrane proton channel, linked together by a central stalk and a peripheral stalk. During catalysis, ATP synthesis in the catalytic domain of F(1) is coupled via a rotary mechanism of the central stalk subunits to proton translocation. Part of the complex F(0) domain. Minor subunit located with subunit a in the membrane (By similarity).</text>
</comment>
<comment type="subunit">
    <text evidence="2">F-type ATPases have 2 components, CF(1) - the catalytic core - and CF(0) - the membrane proton channel. Component of an ATP synthase complex composed of ATP5PB, ATP5MC1, ATP5F1E, ATP5PD, ATP5ME, ATP5PF, ATP5MF, MT-ATP6, MT-ATP8, ATP5F1A, ATP5F1B, ATP5F1D, ATP5F1C, ATP5PO, ATP5MG, ATP5MK and ATP5MJ (By similarity). Interacts with PRICKLE3 (By similarity).</text>
</comment>
<comment type="subcellular location">
    <subcellularLocation>
        <location>Mitochondrion membrane</location>
        <topology>Single-pass membrane protein</topology>
    </subcellularLocation>
</comment>
<comment type="similarity">
    <text evidence="5">Belongs to the ATPase protein 8 family.</text>
</comment>
<gene>
    <name type="primary">MT-ATP8</name>
    <name type="synonym">ATP8</name>
    <name type="synonym">ATPASE8</name>
    <name type="synonym">MTATP8</name>
</gene>
<protein>
    <recommendedName>
        <fullName>ATP synthase protein 8</fullName>
    </recommendedName>
    <alternativeName>
        <fullName>A6L</fullName>
    </alternativeName>
    <alternativeName>
        <fullName>F-ATPase subunit 8</fullName>
    </alternativeName>
</protein>
<keyword id="KW-0007">Acetylation</keyword>
<keyword id="KW-0066">ATP synthesis</keyword>
<keyword id="KW-0138">CF(0)</keyword>
<keyword id="KW-0375">Hydrogen ion transport</keyword>
<keyword id="KW-0406">Ion transport</keyword>
<keyword id="KW-0472">Membrane</keyword>
<keyword id="KW-0496">Mitochondrion</keyword>
<keyword id="KW-0812">Transmembrane</keyword>
<keyword id="KW-1133">Transmembrane helix</keyword>
<keyword id="KW-0813">Transport</keyword>
<proteinExistence type="inferred from homology"/>